<accession>Q95KV1</accession>
<accession>A7YWD1</accession>
<organism>
    <name type="scientific">Bos taurus</name>
    <name type="common">Bovine</name>
    <dbReference type="NCBI Taxonomy" id="9913"/>
    <lineage>
        <taxon>Eukaryota</taxon>
        <taxon>Metazoa</taxon>
        <taxon>Chordata</taxon>
        <taxon>Craniata</taxon>
        <taxon>Vertebrata</taxon>
        <taxon>Euteleostomi</taxon>
        <taxon>Mammalia</taxon>
        <taxon>Eutheria</taxon>
        <taxon>Laurasiatheria</taxon>
        <taxon>Artiodactyla</taxon>
        <taxon>Ruminantia</taxon>
        <taxon>Pecora</taxon>
        <taxon>Bovidae</taxon>
        <taxon>Bovinae</taxon>
        <taxon>Bos</taxon>
    </lineage>
</organism>
<name>IKKA_BOVIN</name>
<dbReference type="EC" id="2.7.11.10" evidence="2"/>
<dbReference type="EMBL" id="AJ414555">
    <property type="protein sequence ID" value="CAC93686.1"/>
    <property type="molecule type" value="mRNA"/>
</dbReference>
<dbReference type="EMBL" id="BC134510">
    <property type="protein sequence ID" value="AAI34511.1"/>
    <property type="molecule type" value="mRNA"/>
</dbReference>
<dbReference type="RefSeq" id="NP_776446.1">
    <property type="nucleotide sequence ID" value="NM_174021.2"/>
</dbReference>
<dbReference type="SMR" id="Q95KV1"/>
<dbReference type="BioGRID" id="158442">
    <property type="interactions" value="2"/>
</dbReference>
<dbReference type="DIP" id="DIP-44031N"/>
<dbReference type="FunCoup" id="Q95KV1">
    <property type="interactions" value="2516"/>
</dbReference>
<dbReference type="IntAct" id="Q95KV1">
    <property type="interactions" value="2"/>
</dbReference>
<dbReference type="STRING" id="9913.ENSBTAP00000065973"/>
<dbReference type="PaxDb" id="9913-ENSBTAP00000009985"/>
<dbReference type="GeneID" id="281073"/>
<dbReference type="KEGG" id="bta:281073"/>
<dbReference type="CTD" id="1147"/>
<dbReference type="VEuPathDB" id="HostDB:ENSBTAG00000007591"/>
<dbReference type="eggNOG" id="KOG4250">
    <property type="taxonomic scope" value="Eukaryota"/>
</dbReference>
<dbReference type="HOGENOM" id="CLU_000288_101_2_1"/>
<dbReference type="InParanoid" id="Q95KV1"/>
<dbReference type="OMA" id="FILMDHI"/>
<dbReference type="OrthoDB" id="267381at2759"/>
<dbReference type="TreeFam" id="TF324269"/>
<dbReference type="Reactome" id="R-BTA-1169091">
    <property type="pathway name" value="Activation of NF-kappaB in B cells"/>
</dbReference>
<dbReference type="Reactome" id="R-BTA-1810476">
    <property type="pathway name" value="RIP-mediated NFkB activation via ZBP1"/>
</dbReference>
<dbReference type="Reactome" id="R-BTA-202424">
    <property type="pathway name" value="Downstream TCR signaling"/>
</dbReference>
<dbReference type="Reactome" id="R-BTA-2871837">
    <property type="pathway name" value="FCERI mediated NF-kB activation"/>
</dbReference>
<dbReference type="Reactome" id="R-BTA-445989">
    <property type="pathway name" value="TAK1-dependent IKK and NF-kappa-B activation"/>
</dbReference>
<dbReference type="Reactome" id="R-BTA-5357905">
    <property type="pathway name" value="Regulation of TNFR1 signaling"/>
</dbReference>
<dbReference type="Reactome" id="R-BTA-5357956">
    <property type="pathway name" value="TNFR1-induced NF-kappa-B signaling pathway"/>
</dbReference>
<dbReference type="Reactome" id="R-BTA-5607761">
    <property type="pathway name" value="Dectin-1 mediated noncanonical NF-kB signaling"/>
</dbReference>
<dbReference type="Reactome" id="R-BTA-5607764">
    <property type="pathway name" value="CLEC7A (Dectin-1) signaling"/>
</dbReference>
<dbReference type="Reactome" id="R-BTA-5676590">
    <property type="pathway name" value="NIK--&gt;noncanonical NF-kB signaling"/>
</dbReference>
<dbReference type="Reactome" id="R-BTA-5684264">
    <property type="pathway name" value="MAP3K8 (TPL2)-dependent MAPK1/3 activation"/>
</dbReference>
<dbReference type="Reactome" id="R-BTA-9020702">
    <property type="pathway name" value="Interleukin-1 signaling"/>
</dbReference>
<dbReference type="Reactome" id="R-BTA-933542">
    <property type="pathway name" value="TRAF6 mediated NF-kB activation"/>
</dbReference>
<dbReference type="Reactome" id="R-BTA-937039">
    <property type="pathway name" value="IRAK1 recruits IKK complex"/>
</dbReference>
<dbReference type="Reactome" id="R-BTA-937041">
    <property type="pathway name" value="IKK complex recruitment mediated by RIP1"/>
</dbReference>
<dbReference type="Reactome" id="R-BTA-975144">
    <property type="pathway name" value="IRAK1 recruits IKK complex upon TLR7/8 or 9 stimulation"/>
</dbReference>
<dbReference type="Reactome" id="R-BTA-9758274">
    <property type="pathway name" value="Regulation of NF-kappa B signaling"/>
</dbReference>
<dbReference type="Reactome" id="R-BTA-9833482">
    <property type="pathway name" value="PKR-mediated signaling"/>
</dbReference>
<dbReference type="Reactome" id="R-BTA-9860276">
    <property type="pathway name" value="SLC15A4:TASL-dependent IRF5 activation"/>
</dbReference>
<dbReference type="Reactome" id="R-BTA-9860927">
    <property type="pathway name" value="Turbulent (oscillatory, disturbed) flow shear stress activates signaling by PIEZO1 and integrins in endothelial cells"/>
</dbReference>
<dbReference type="Reactome" id="R-BTA-9909505">
    <property type="pathway name" value="Modulation of host responses by IFN-stimulated genes"/>
</dbReference>
<dbReference type="Proteomes" id="UP000009136">
    <property type="component" value="Chromosome 26"/>
</dbReference>
<dbReference type="Bgee" id="ENSBTAG00000007591">
    <property type="expression patterns" value="Expressed in spermatocyte and 105 other cell types or tissues"/>
</dbReference>
<dbReference type="GO" id="GO:0005737">
    <property type="term" value="C:cytoplasm"/>
    <property type="evidence" value="ECO:0000318"/>
    <property type="project" value="GO_Central"/>
</dbReference>
<dbReference type="GO" id="GO:0008385">
    <property type="term" value="C:IkappaB kinase complex"/>
    <property type="evidence" value="ECO:0000318"/>
    <property type="project" value="GO_Central"/>
</dbReference>
<dbReference type="GO" id="GO:0005634">
    <property type="term" value="C:nucleus"/>
    <property type="evidence" value="ECO:0007669"/>
    <property type="project" value="UniProtKB-SubCell"/>
</dbReference>
<dbReference type="GO" id="GO:0005524">
    <property type="term" value="F:ATP binding"/>
    <property type="evidence" value="ECO:0007669"/>
    <property type="project" value="UniProtKB-KW"/>
</dbReference>
<dbReference type="GO" id="GO:0008384">
    <property type="term" value="F:IkappaB kinase activity"/>
    <property type="evidence" value="ECO:0007669"/>
    <property type="project" value="UniProtKB-EC"/>
</dbReference>
<dbReference type="GO" id="GO:0046982">
    <property type="term" value="F:protein heterodimerization activity"/>
    <property type="evidence" value="ECO:0000250"/>
    <property type="project" value="UniProtKB"/>
</dbReference>
<dbReference type="GO" id="GO:0042803">
    <property type="term" value="F:protein homodimerization activity"/>
    <property type="evidence" value="ECO:0000250"/>
    <property type="project" value="UniProtKB"/>
</dbReference>
<dbReference type="GO" id="GO:0004672">
    <property type="term" value="F:protein kinase activity"/>
    <property type="evidence" value="ECO:0000250"/>
    <property type="project" value="UniProtKB"/>
</dbReference>
<dbReference type="GO" id="GO:0004674">
    <property type="term" value="F:protein serine/threonine kinase activity"/>
    <property type="evidence" value="ECO:0000250"/>
    <property type="project" value="UniProtKB"/>
</dbReference>
<dbReference type="GO" id="GO:0071356">
    <property type="term" value="P:cellular response to tumor necrosis factor"/>
    <property type="evidence" value="ECO:0000250"/>
    <property type="project" value="UniProtKB"/>
</dbReference>
<dbReference type="GO" id="GO:0043123">
    <property type="term" value="P:positive regulation of canonical NF-kappaB signal transduction"/>
    <property type="evidence" value="ECO:0000318"/>
    <property type="project" value="GO_Central"/>
</dbReference>
<dbReference type="GO" id="GO:0010628">
    <property type="term" value="P:positive regulation of gene expression"/>
    <property type="evidence" value="ECO:0007669"/>
    <property type="project" value="UniProtKB-ARBA"/>
</dbReference>
<dbReference type="GO" id="GO:0045944">
    <property type="term" value="P:positive regulation of transcription by RNA polymerase II"/>
    <property type="evidence" value="ECO:0000250"/>
    <property type="project" value="UniProtKB"/>
</dbReference>
<dbReference type="GO" id="GO:0033209">
    <property type="term" value="P:tumor necrosis factor-mediated signaling pathway"/>
    <property type="evidence" value="ECO:0000318"/>
    <property type="project" value="GO_Central"/>
</dbReference>
<dbReference type="CDD" id="cd14039">
    <property type="entry name" value="STKc_IKK_alpha"/>
    <property type="match status" value="1"/>
</dbReference>
<dbReference type="CDD" id="cd17046">
    <property type="entry name" value="Ubl_IKKA_like"/>
    <property type="match status" value="1"/>
</dbReference>
<dbReference type="FunFam" id="1.20.1270.250:FF:000001">
    <property type="entry name" value="Inhibitor of nuclear factor kappa-B kinase subunit alpha"/>
    <property type="match status" value="1"/>
</dbReference>
<dbReference type="FunFam" id="3.10.20.90:FF:000061">
    <property type="entry name" value="Inhibitor of nuclear factor kappa-B kinase subunit alpha"/>
    <property type="match status" value="1"/>
</dbReference>
<dbReference type="FunFam" id="1.10.510.10:FF:000147">
    <property type="entry name" value="Inhibitor of nuclear factor kappa-B kinase subunit beta"/>
    <property type="match status" value="1"/>
</dbReference>
<dbReference type="Gene3D" id="1.20.1270.250">
    <property type="match status" value="1"/>
</dbReference>
<dbReference type="Gene3D" id="3.10.20.90">
    <property type="entry name" value="Phosphatidylinositol 3-kinase Catalytic Subunit, Chain A, domain 1"/>
    <property type="match status" value="1"/>
</dbReference>
<dbReference type="Gene3D" id="1.10.510.10">
    <property type="entry name" value="Transferase(Phosphotransferase) domain 1"/>
    <property type="match status" value="1"/>
</dbReference>
<dbReference type="InterPro" id="IPR041185">
    <property type="entry name" value="IKBKB_SDD"/>
</dbReference>
<dbReference type="InterPro" id="IPR046375">
    <property type="entry name" value="IKBKB_SDD_sf"/>
</dbReference>
<dbReference type="InterPro" id="IPR051180">
    <property type="entry name" value="IKK"/>
</dbReference>
<dbReference type="InterPro" id="IPR022007">
    <property type="entry name" value="IKKbetaNEMObind"/>
</dbReference>
<dbReference type="InterPro" id="IPR011009">
    <property type="entry name" value="Kinase-like_dom_sf"/>
</dbReference>
<dbReference type="InterPro" id="IPR000719">
    <property type="entry name" value="Prot_kinase_dom"/>
</dbReference>
<dbReference type="InterPro" id="IPR017441">
    <property type="entry name" value="Protein_kinase_ATP_BS"/>
</dbReference>
<dbReference type="InterPro" id="IPR008271">
    <property type="entry name" value="Ser/Thr_kinase_AS"/>
</dbReference>
<dbReference type="PANTHER" id="PTHR22969">
    <property type="entry name" value="IKB KINASE"/>
    <property type="match status" value="1"/>
</dbReference>
<dbReference type="PANTHER" id="PTHR22969:SF13">
    <property type="entry name" value="INHIBITOR OF NUCLEAR FACTOR KAPPA-B KINASE SUBUNIT ALPHA"/>
    <property type="match status" value="1"/>
</dbReference>
<dbReference type="Pfam" id="PF18397">
    <property type="entry name" value="IKBKB_SDD"/>
    <property type="match status" value="1"/>
</dbReference>
<dbReference type="Pfam" id="PF12179">
    <property type="entry name" value="IKKbetaNEMObind"/>
    <property type="match status" value="1"/>
</dbReference>
<dbReference type="Pfam" id="PF00069">
    <property type="entry name" value="Pkinase"/>
    <property type="match status" value="1"/>
</dbReference>
<dbReference type="SMART" id="SM01239">
    <property type="entry name" value="IKKbetaNEMObind"/>
    <property type="match status" value="1"/>
</dbReference>
<dbReference type="SMART" id="SM00220">
    <property type="entry name" value="S_TKc"/>
    <property type="match status" value="1"/>
</dbReference>
<dbReference type="SUPFAM" id="SSF56112">
    <property type="entry name" value="Protein kinase-like (PK-like)"/>
    <property type="match status" value="1"/>
</dbReference>
<dbReference type="PROSITE" id="PS00107">
    <property type="entry name" value="PROTEIN_KINASE_ATP"/>
    <property type="match status" value="1"/>
</dbReference>
<dbReference type="PROSITE" id="PS50011">
    <property type="entry name" value="PROTEIN_KINASE_DOM"/>
    <property type="match status" value="1"/>
</dbReference>
<dbReference type="PROSITE" id="PS00108">
    <property type="entry name" value="PROTEIN_KINASE_ST"/>
    <property type="match status" value="1"/>
</dbReference>
<protein>
    <recommendedName>
        <fullName>Inhibitor of nuclear factor kappa-B kinase subunit alpha</fullName>
        <shortName>I-kappa-B kinase alpha</shortName>
        <shortName>IKK-A</shortName>
        <shortName>IKK-alpha</shortName>
        <shortName>IkBKA</shortName>
        <ecNumber evidence="2">2.7.11.10</ecNumber>
    </recommendedName>
    <alternativeName>
        <fullName>I-kappa-B kinase 1</fullName>
        <shortName>IKK1</shortName>
    </alternativeName>
    <alternativeName>
        <fullName>Nuclear factor NF-kappa-B inhibitor kinase alpha</fullName>
        <shortName>NFKBIKA</shortName>
    </alternativeName>
</protein>
<gene>
    <name type="primary">CHUK</name>
    <name type="synonym">IKKA</name>
</gene>
<sequence length="740" mass="84344">MERPPGLRPGAGGPWEMRERLGTGGFGNVCLYQHRELDLKIAIKSCRLELSTKNRERWCHEIQIMKKLNHANVVKACDVPEELNFLINDVPLLAMEYCSGGDLRKLLNKPENCCGLKESQILSLLSDIGSGIRYLHENKIIHRDLKPENIVLQDVGGKIMHKIIDLGYAKDVDQGSLCTSFVGTLQYLAPELFENKPYTATVDYWSFGTMVFECIAGYRPFLHHLQPFTWHEKIKKKDPKCIFACEEMTGEVRFSSHLPQPNSLCSLIVEPMENWLQLMLNWDPQQRGGPVDLTLKQPRCFVLMDHILNLKIVHILNMTSAKIISFLLPPDESLHSLQSRIERETGINTGSQELLSEMGISLDPRKPASQCVLDGVRGCDSYMVYLFDKSKTVYEGPFASRSLSDCVNYIVQDSKIQLPIIQLRKVWAEAVHYVSGLKEDYSRLFQGQRAAMLSLLRYNTNLTKMKNTLISASQQLKAKLEFFHKSIQLDLERYSEQMTYGISSEKMLKAWKEMEEKAIHYAEVGVIGYLEDQIMSLHTEIMELQKSPYGRRQGDLMESLEQRAIDLYKQLKHRPSDHSYSDSTEMVKIIVHTVQSQDRVLKELFGHLSKLLGCKQKIIDLLPKVEMALSNIKEADSTVMFMQGKRQKEIWHLLKIACTQSSARSLVGSSLEGVTPQLPPTSAEREHPLSCVVTPQDGETLAQMIEENLNCLGHLSTIIHEANEKQGNNMMSLDWSWLTE</sequence>
<evidence type="ECO:0000250" key="1"/>
<evidence type="ECO:0000250" key="2">
    <source>
        <dbReference type="UniProtKB" id="O15111"/>
    </source>
</evidence>
<evidence type="ECO:0000250" key="3">
    <source>
        <dbReference type="UniProtKB" id="Q60680"/>
    </source>
</evidence>
<evidence type="ECO:0000255" key="4">
    <source>
        <dbReference type="PROSITE-ProRule" id="PRU00159"/>
    </source>
</evidence>
<evidence type="ECO:0000255" key="5">
    <source>
        <dbReference type="PROSITE-ProRule" id="PRU10027"/>
    </source>
</evidence>
<evidence type="ECO:0000269" key="6">
    <source>
    </source>
</evidence>
<proteinExistence type="evidence at protein level"/>
<feature type="chain" id="PRO_0000268159" description="Inhibitor of nuclear factor kappa-B kinase subunit alpha">
    <location>
        <begin position="1"/>
        <end position="740"/>
    </location>
</feature>
<feature type="domain" description="Protein kinase" evidence="4">
    <location>
        <begin position="15"/>
        <end position="302"/>
    </location>
</feature>
<feature type="region of interest" description="Leucine-zipper">
    <location>
        <begin position="455"/>
        <end position="476"/>
    </location>
</feature>
<feature type="region of interest" description="NEMO-binding" evidence="1">
    <location>
        <begin position="733"/>
        <end position="738"/>
    </location>
</feature>
<feature type="active site" description="Proton acceptor" evidence="4 5">
    <location>
        <position position="144"/>
    </location>
</feature>
<feature type="binding site" evidence="4">
    <location>
        <begin position="21"/>
        <end position="29"/>
    </location>
    <ligand>
        <name>ATP</name>
        <dbReference type="ChEBI" id="CHEBI:30616"/>
    </ligand>
</feature>
<feature type="binding site" evidence="4">
    <location>
        <position position="44"/>
    </location>
    <ligand>
        <name>ATP</name>
        <dbReference type="ChEBI" id="CHEBI:30616"/>
    </ligand>
</feature>
<feature type="modified residue" description="Phosphothreonine; by PKB/AKT1" evidence="2">
    <location>
        <position position="23"/>
    </location>
</feature>
<feature type="modified residue" description="Phosphoserine; by MAP3K14" evidence="2">
    <location>
        <position position="176"/>
    </location>
</feature>
<feature type="modified residue" description="Phosphoserine" evidence="2">
    <location>
        <position position="180"/>
    </location>
</feature>
<comment type="function">
    <text evidence="2 3">Serine kinase that plays an essential role in the NF-kappa-B signaling pathway which is activated by multiple stimuli such as inflammatory cytokines, bacterial or viral products, DNA damages or other cellular stresses. Acts as a part of the canonical IKK complex in the conventional pathway of NF-kappa-B activation and phosphorylates inhibitors of NF-kappa-B on serine residues. These modifications allow polyubiquitination of the inhibitors and subsequent degradation by the proteasome. In turn, free NF-kappa-B is translocated into the nucleus and activates the transcription of hundreds of genes involved in immune response, growth control, or protection against apoptosis. Negatively regulates the pathway by phosphorylating the scaffold protein TAXBP1 and thus promoting the assembly of the A20/TNFAIP3 ubiquitin-editing complex (composed of A20/TNFAIP3, TAX1BP1, and the E3 ligases ITCH and RNF11). Therefore, CHUK plays a key role in the negative feedback of NF-kappa-B canonical signaling to limit inflammatory gene activation. As part of the non-canonical pathway of NF-kappa-B activation, the MAP3K14-activated CHUK/IKKA homodimer phosphorylates NFKB2/p100 associated with RelB, inducing its proteolytic processing to NFKB2/p52 and the formation of NF-kappa-B RelB-p52 complexes. In turn, these complexes regulate genes encoding molecules involved in B-cell survival and lymphoid organogenesis. Also participates in the negative feedback of the non-canonical NF-kappa-B signaling pathway by phosphorylating and destabilizing MAP3K14/NIK. Within the nucleus, phosphorylates CREBBP and consequently increases both its transcriptional and histone acetyltransferase activities. Modulates chromatin accessibility at NF-kappa-B-responsive promoters by phosphorylating histones H3 at 'Ser-10' that are subsequently acetylated at 'Lys-14' by CREBBP. Additionally, phosphorylates the CREBBP-interacting protein NCOA3. Also phosphorylates FOXO3 and may regulate this pro-apoptotic transcription factor. Interacts with SASH1 (By similarity). Phosphorylates RIPK1 at 'Ser-25' which represses its kinase activity and consequently prevents TNF-mediated RIPK1-dependent cell death (By similarity). Phosphorylates AMBRA1 following mitophagy induction, promoting AMBRA1 interaction with ATG8 family proteins and its mitophagic activity (By similarity).</text>
</comment>
<comment type="catalytic activity">
    <reaction evidence="2">
        <text>L-seryl-[I-kappa-B protein] + ATP = O-phospho-L-seryl-[I-kappa-B protein] + ADP + H(+)</text>
        <dbReference type="Rhea" id="RHEA:19073"/>
        <dbReference type="Rhea" id="RHEA-COMP:13698"/>
        <dbReference type="Rhea" id="RHEA-COMP:13699"/>
        <dbReference type="ChEBI" id="CHEBI:15378"/>
        <dbReference type="ChEBI" id="CHEBI:29999"/>
        <dbReference type="ChEBI" id="CHEBI:30616"/>
        <dbReference type="ChEBI" id="CHEBI:83421"/>
        <dbReference type="ChEBI" id="CHEBI:456216"/>
        <dbReference type="EC" id="2.7.11.10"/>
    </reaction>
</comment>
<comment type="activity regulation">
    <text>Activated when phosphorylated and inactivated when dephosphorylated.</text>
</comment>
<comment type="subunit">
    <text evidence="2 3 6">Component of the I-kappa-B-kinase (IKK) core complex consisting of CHUK, IKBKB and IKBKG; probably four alpha/CHUK-beta/IKBKB dimers are associated with four gamma/IKBKG subunits. The IKK core complex seems to associate with regulatory or adapter proteins to form a IKK-signalosome holo-complex (PubMed:12459277). The IKK complex associates with TERF2IP/RAP1, leading to promote IKK-mediated phosphorylation of RELA/p65. Part of a complex composed of NCOA2, NCOA3, CHUK/IKKA, IKBKB, IKBKG and CREBBP. Part of a 70-90 kDa complex at least consisting of CHUK/IKKA, IKBKB, NFKBIA, RELA, ELP1 and MAP3K14. Directly interacts with TRPC4AP. May interact with TRAF2. Interacts with NALP2. May interact with MAVS/IPS1. Interacts with ARRB1 and ARRB2. Interacts with NLRC5; prevents CHUK phosphorylation and kinase activity. Interacts with PIAS1; this interaction induces PIAS1 phosphorylation. Interacts with ZNF268 isoform 2; the interaction is further increased in a TNF-alpha-dependent manner (By similarity). Interacts with IFIT5; the interaction synergizes the recruitment of IKK to MAP3K7 and enhances IKK phosphorylation (By similarity). Interacts with LRRC14 (By similarity). Directly interacts with DDX3X after the physiological activation of the TLR7 and TLR8 pathways; this interaction enhances CHUK autophosphorylation (By similarity).</text>
</comment>
<comment type="subcellular location">
    <subcellularLocation>
        <location evidence="2">Cytoplasm</location>
    </subcellularLocation>
    <subcellularLocation>
        <location evidence="2">Nucleus</location>
    </subcellularLocation>
    <text evidence="1">Shuttles between the cytoplasm and the nucleus.</text>
</comment>
<comment type="domain">
    <text evidence="1">The kinase domain is located in the N-terminal region. The leucine zipper is important to allow homo- and hetero-dimerization. At the C-terminal region is located the region responsible for the interaction with NEMO/IKBKG (By similarity).</text>
</comment>
<comment type="PTM">
    <text evidence="2">Ubiquitinated by TRIM56 via 'Lys-63'-linked ubiquitination, promoting activation of CHUK/IKKA.</text>
</comment>
<comment type="PTM">
    <text evidence="1">Phosphorylated by MAP3K14/NIK, AKT and to a lesser extent by MEKK1, and dephosphorylated by PP2A. Autophosphorylated (By similarity).</text>
</comment>
<comment type="similarity">
    <text evidence="4">Belongs to the protein kinase superfamily. Ser/Thr protein kinase family. I-kappa-B kinase subfamily.</text>
</comment>
<keyword id="KW-0067">ATP-binding</keyword>
<keyword id="KW-0963">Cytoplasm</keyword>
<keyword id="KW-0418">Kinase</keyword>
<keyword id="KW-0547">Nucleotide-binding</keyword>
<keyword id="KW-0539">Nucleus</keyword>
<keyword id="KW-0597">Phosphoprotein</keyword>
<keyword id="KW-1185">Reference proteome</keyword>
<keyword id="KW-0723">Serine/threonine-protein kinase</keyword>
<keyword id="KW-0808">Transferase</keyword>
<keyword id="KW-0832">Ubl conjugation</keyword>
<reference key="1">
    <citation type="journal article" date="2002" name="Gene">
        <title>Characterization of the bovine IkappaB kinases (IKK)alpha and IKKbeta, the regulatory subunit NEMO and their substrate IkappaBalpha.</title>
        <authorList>
            <person name="Rottenberg S."/>
            <person name="Schmuckli-Maurer J."/>
            <person name="Grimm S."/>
            <person name="Heussler V.T."/>
            <person name="Dobbelaere D.A.E."/>
        </authorList>
    </citation>
    <scope>NUCLEOTIDE SEQUENCE [MRNA]</scope>
    <scope>INTERACTION WITH IKBKB AND IKBKG</scope>
</reference>
<reference key="2">
    <citation type="submission" date="2007-03" db="EMBL/GenBank/DDBJ databases">
        <authorList>
            <consortium name="NIH - Mammalian Gene Collection (MGC) project"/>
        </authorList>
    </citation>
    <scope>NUCLEOTIDE SEQUENCE [LARGE SCALE MRNA]</scope>
    <source>
        <strain>Hereford</strain>
        <tissue>Ascending colon</tissue>
    </source>
</reference>